<comment type="similarity">
    <text evidence="2">Belongs to the formin-like family. Class-II subfamily.</text>
</comment>
<comment type="sequence caution" evidence="2">
    <conflict type="erroneous gene model prediction">
        <sequence resource="EMBL-CDS" id="AED91189"/>
    </conflict>
    <text>The predicted gene At5g07650 has been split into 2 genes: At5g07645 and At5g07650.</text>
</comment>
<comment type="sequence caution" evidence="2">
    <conflict type="erroneous gene model prediction">
        <sequence resource="EMBL-CDS" id="BAB11443"/>
    </conflict>
    <text>The predicted gene At5g07650 has been split into 2 genes: At5g07645 and At5g07650.</text>
</comment>
<accession>P0C5K3</accession>
<accession>F4K838</accession>
<accession>Q9FLR6</accession>
<reference key="1">
    <citation type="journal article" date="1998" name="DNA Res.">
        <title>Structural analysis of Arabidopsis thaliana chromosome 5. IV. Sequence features of the regions of 1,456,315 bp covered by nineteen physically assigned P1 and TAC clones.</title>
        <authorList>
            <person name="Sato S."/>
            <person name="Kaneko T."/>
            <person name="Kotani H."/>
            <person name="Nakamura Y."/>
            <person name="Asamizu E."/>
            <person name="Miyajima N."/>
            <person name="Tabata S."/>
        </authorList>
    </citation>
    <scope>NUCLEOTIDE SEQUENCE [LARGE SCALE GENOMIC DNA]</scope>
    <source>
        <strain>cv. Columbia</strain>
    </source>
</reference>
<reference key="2">
    <citation type="journal article" date="2017" name="Plant J.">
        <title>Araport11: a complete reannotation of the Arabidopsis thaliana reference genome.</title>
        <authorList>
            <person name="Cheng C.Y."/>
            <person name="Krishnakumar V."/>
            <person name="Chan A.P."/>
            <person name="Thibaud-Nissen F."/>
            <person name="Schobel S."/>
            <person name="Town C.D."/>
        </authorList>
    </citation>
    <scope>GENOME REANNOTATION</scope>
    <source>
        <strain>cv. Columbia</strain>
    </source>
</reference>
<reference key="3">
    <citation type="journal article" date="2002" name="Trends Plant Sci.">
        <title>Formins: intermediates in signal-transduction cascades that affect cytoskeletal reorganization.</title>
        <authorList>
            <person name="Deeks M.J."/>
            <person name="Hussey P.J."/>
            <person name="Davies B."/>
        </authorList>
    </citation>
    <scope>GENE FAMILY ORGANIZATION</scope>
    <scope>NOMENCLATURE</scope>
</reference>
<reference key="4">
    <citation type="journal article" date="2004" name="BMC Genomics">
        <title>Formin homology 2 domains occur in multiple contexts in angiosperms.</title>
        <authorList>
            <person name="Cvrckova F."/>
            <person name="Novotny M."/>
            <person name="Pickova D."/>
            <person name="Zarsky V."/>
        </authorList>
    </citation>
    <scope>GENE FAMILY ORGANIZATION</scope>
    <scope>NOMENCLATURE</scope>
</reference>
<organism>
    <name type="scientific">Arabidopsis thaliana</name>
    <name type="common">Mouse-ear cress</name>
    <dbReference type="NCBI Taxonomy" id="3702"/>
    <lineage>
        <taxon>Eukaryota</taxon>
        <taxon>Viridiplantae</taxon>
        <taxon>Streptophyta</taxon>
        <taxon>Embryophyta</taxon>
        <taxon>Tracheophyta</taxon>
        <taxon>Spermatophyta</taxon>
        <taxon>Magnoliopsida</taxon>
        <taxon>eudicotyledons</taxon>
        <taxon>Gunneridae</taxon>
        <taxon>Pentapetalae</taxon>
        <taxon>rosids</taxon>
        <taxon>malvids</taxon>
        <taxon>Brassicales</taxon>
        <taxon>Brassicaceae</taxon>
        <taxon>Camelineae</taxon>
        <taxon>Arabidopsis</taxon>
    </lineage>
</organism>
<keyword id="KW-1185">Reference proteome</keyword>
<feature type="chain" id="PRO_0000308541" description="Putative formin-like protein 15b">
    <location>
        <begin position="1"/>
        <end position="352"/>
    </location>
</feature>
<feature type="domain" description="FH2" evidence="1">
    <location>
        <begin position="1"/>
        <end position="350"/>
    </location>
</feature>
<protein>
    <recommendedName>
        <fullName>Putative formin-like protein 15b</fullName>
        <shortName>AtFH15b</shortName>
    </recommendedName>
</protein>
<name>FH15B_ARATH</name>
<evidence type="ECO:0000255" key="1">
    <source>
        <dbReference type="PROSITE-ProRule" id="PRU00774"/>
    </source>
</evidence>
<evidence type="ECO:0000305" key="2"/>
<proteinExistence type="inferred from homology"/>
<sequence>MTLFNFIKLFKKAHEENVKQADLEKKKAMKQIDLRRANDTEIMLTKVNIPLADMMAAVLGMDEYVLDVDQIENLIRFCPTKEEMELLKNYTGDKATLGKCEQYFLEVMKVPGVESKLRAFSFKIQFGTQIAELNKGLNAVNSACEEVRTSEKLKEIMANILCMGNILNQGTAEGSAVGFKLKSLLILSDTCAPNSKMTLMHYLCKVLASKASDLLDFHKDLESLESASKIQLKSLAEEIQAITKGLEKLNKQLTASESDGPVSQVFRKVLKDFISMAETQVATVSSLYSSGKNADALAHYFGEDPNHYPFEKVTTTLLSFIRLFKKAHEENVKQADLDKNKDAKEAEMEKTK</sequence>
<dbReference type="EMBL" id="AB010070">
    <property type="protein sequence ID" value="BAB11443.1"/>
    <property type="status" value="ALT_SEQ"/>
    <property type="molecule type" value="Genomic_DNA"/>
</dbReference>
<dbReference type="EMBL" id="CP002688">
    <property type="protein sequence ID" value="AED91189.1"/>
    <property type="status" value="ALT_SEQ"/>
    <property type="molecule type" value="Genomic_DNA"/>
</dbReference>
<dbReference type="RefSeq" id="NP_196382.2">
    <property type="nucleotide sequence ID" value="NM_120847.3"/>
</dbReference>
<dbReference type="SMR" id="P0C5K3"/>
<dbReference type="STRING" id="3702.P0C5K3"/>
<dbReference type="PaxDb" id="3702-AT5G07650.1"/>
<dbReference type="PeptideAtlas" id="P0C5K3"/>
<dbReference type="GeneID" id="830658"/>
<dbReference type="KEGG" id="ath:AT5G07650"/>
<dbReference type="Araport" id="AT5G07645"/>
<dbReference type="TAIR" id="AT5G07645"/>
<dbReference type="eggNOG" id="KOG1922">
    <property type="taxonomic scope" value="Eukaryota"/>
</dbReference>
<dbReference type="HOGENOM" id="CLU_366986_0_0_1"/>
<dbReference type="InParanoid" id="P0C5K3"/>
<dbReference type="PRO" id="PR:P0C5K3"/>
<dbReference type="Proteomes" id="UP000006548">
    <property type="component" value="Chromosome 5"/>
</dbReference>
<dbReference type="ExpressionAtlas" id="P0C5K3">
    <property type="expression patterns" value="baseline and differential"/>
</dbReference>
<dbReference type="Gene3D" id="1.20.58.2220">
    <property type="entry name" value="Formin, FH2 domain"/>
    <property type="match status" value="1"/>
</dbReference>
<dbReference type="InterPro" id="IPR015425">
    <property type="entry name" value="FH2_Formin"/>
</dbReference>
<dbReference type="InterPro" id="IPR042201">
    <property type="entry name" value="FH2_Formin_sf"/>
</dbReference>
<dbReference type="InterPro" id="IPR051144">
    <property type="entry name" value="Formin_homology_domain"/>
</dbReference>
<dbReference type="PANTHER" id="PTHR45733">
    <property type="entry name" value="FORMIN-J"/>
    <property type="match status" value="1"/>
</dbReference>
<dbReference type="PANTHER" id="PTHR45733:SF10">
    <property type="entry name" value="FORMIN-LIKE PROTEIN 15A-RELATED"/>
    <property type="match status" value="1"/>
</dbReference>
<dbReference type="Pfam" id="PF02181">
    <property type="entry name" value="FH2"/>
    <property type="match status" value="1"/>
</dbReference>
<dbReference type="SMART" id="SM00498">
    <property type="entry name" value="FH2"/>
    <property type="match status" value="1"/>
</dbReference>
<dbReference type="SUPFAM" id="SSF101447">
    <property type="entry name" value="Formin homology 2 domain (FH2 domain)"/>
    <property type="match status" value="1"/>
</dbReference>
<dbReference type="PROSITE" id="PS51444">
    <property type="entry name" value="FH2"/>
    <property type="match status" value="1"/>
</dbReference>
<gene>
    <name type="primary">FH15B</name>
    <name type="ordered locus">At5g07645</name>
    <name type="ORF">MBK20.9</name>
</gene>